<reference key="1">
    <citation type="journal article" date="2005" name="J. Bacteriol.">
        <title>Swine and poultry pathogens: the complete genome sequences of two strains of Mycoplasma hyopneumoniae and a strain of Mycoplasma synoviae.</title>
        <authorList>
            <person name="Vasconcelos A.T.R."/>
            <person name="Ferreira H.B."/>
            <person name="Bizarro C.V."/>
            <person name="Bonatto S.L."/>
            <person name="Carvalho M.O."/>
            <person name="Pinto P.M."/>
            <person name="Almeida D.F."/>
            <person name="Almeida L.G.P."/>
            <person name="Almeida R."/>
            <person name="Alves-Junior L."/>
            <person name="Assuncao E.N."/>
            <person name="Azevedo V.A.C."/>
            <person name="Bogo M.R."/>
            <person name="Brigido M.M."/>
            <person name="Brocchi M."/>
            <person name="Burity H.A."/>
            <person name="Camargo A.A."/>
            <person name="Camargo S.S."/>
            <person name="Carepo M.S."/>
            <person name="Carraro D.M."/>
            <person name="de Mattos Cascardo J.C."/>
            <person name="Castro L.A."/>
            <person name="Cavalcanti G."/>
            <person name="Chemale G."/>
            <person name="Collevatti R.G."/>
            <person name="Cunha C.W."/>
            <person name="Dallagiovanna B."/>
            <person name="Dambros B.P."/>
            <person name="Dellagostin O.A."/>
            <person name="Falcao C."/>
            <person name="Fantinatti-Garboggini F."/>
            <person name="Felipe M.S.S."/>
            <person name="Fiorentin L."/>
            <person name="Franco G.R."/>
            <person name="Freitas N.S.A."/>
            <person name="Frias D."/>
            <person name="Grangeiro T.B."/>
            <person name="Grisard E.C."/>
            <person name="Guimaraes C.T."/>
            <person name="Hungria M."/>
            <person name="Jardim S.N."/>
            <person name="Krieger M.A."/>
            <person name="Laurino J.P."/>
            <person name="Lima L.F.A."/>
            <person name="Lopes M.I."/>
            <person name="Loreto E.L.S."/>
            <person name="Madeira H.M.F."/>
            <person name="Manfio G.P."/>
            <person name="Maranhao A.Q."/>
            <person name="Martinkovics C.T."/>
            <person name="Medeiros S.R.B."/>
            <person name="Moreira M.A.M."/>
            <person name="Neiva M."/>
            <person name="Ramalho-Neto C.E."/>
            <person name="Nicolas M.F."/>
            <person name="Oliveira S.C."/>
            <person name="Paixao R.F.C."/>
            <person name="Pedrosa F.O."/>
            <person name="Pena S.D.J."/>
            <person name="Pereira M."/>
            <person name="Pereira-Ferrari L."/>
            <person name="Piffer I."/>
            <person name="Pinto L.S."/>
            <person name="Potrich D.P."/>
            <person name="Salim A.C.M."/>
            <person name="Santos F.R."/>
            <person name="Schmitt R."/>
            <person name="Schneider M.P.C."/>
            <person name="Schrank A."/>
            <person name="Schrank I.S."/>
            <person name="Schuck A.F."/>
            <person name="Seuanez H.N."/>
            <person name="Silva D.W."/>
            <person name="Silva R."/>
            <person name="Silva S.C."/>
            <person name="Soares C.M.A."/>
            <person name="Souza K.R.L."/>
            <person name="Souza R.C."/>
            <person name="Staats C.C."/>
            <person name="Steffens M.B.R."/>
            <person name="Teixeira S.M.R."/>
            <person name="Urmenyi T.P."/>
            <person name="Vainstein M.H."/>
            <person name="Zuccherato L.W."/>
            <person name="Simpson A.J.G."/>
            <person name="Zaha A."/>
        </authorList>
    </citation>
    <scope>NUCLEOTIDE SEQUENCE [LARGE SCALE GENOMIC DNA]</scope>
    <source>
        <strain>53</strain>
    </source>
</reference>
<dbReference type="EMBL" id="AE017245">
    <property type="protein sequence ID" value="AAZ43785.1"/>
    <property type="molecule type" value="Genomic_DNA"/>
</dbReference>
<dbReference type="RefSeq" id="WP_011283516.1">
    <property type="nucleotide sequence ID" value="NC_007294.1"/>
</dbReference>
<dbReference type="SMR" id="Q4A636"/>
<dbReference type="STRING" id="262723.MS53_0373"/>
<dbReference type="KEGG" id="msy:MS53_0373"/>
<dbReference type="eggNOG" id="COG0217">
    <property type="taxonomic scope" value="Bacteria"/>
</dbReference>
<dbReference type="HOGENOM" id="CLU_062974_2_2_14"/>
<dbReference type="OrthoDB" id="9781053at2"/>
<dbReference type="Proteomes" id="UP000000549">
    <property type="component" value="Chromosome"/>
</dbReference>
<dbReference type="GO" id="GO:0005829">
    <property type="term" value="C:cytosol"/>
    <property type="evidence" value="ECO:0007669"/>
    <property type="project" value="TreeGrafter"/>
</dbReference>
<dbReference type="GO" id="GO:0003677">
    <property type="term" value="F:DNA binding"/>
    <property type="evidence" value="ECO:0007669"/>
    <property type="project" value="UniProtKB-UniRule"/>
</dbReference>
<dbReference type="GO" id="GO:0006355">
    <property type="term" value="P:regulation of DNA-templated transcription"/>
    <property type="evidence" value="ECO:0007669"/>
    <property type="project" value="UniProtKB-UniRule"/>
</dbReference>
<dbReference type="FunFam" id="1.10.10.200:FF:000002">
    <property type="entry name" value="Probable transcriptional regulatory protein CLM62_37755"/>
    <property type="match status" value="1"/>
</dbReference>
<dbReference type="Gene3D" id="1.10.10.200">
    <property type="match status" value="1"/>
</dbReference>
<dbReference type="Gene3D" id="3.30.70.980">
    <property type="match status" value="2"/>
</dbReference>
<dbReference type="HAMAP" id="MF_00693">
    <property type="entry name" value="Transcrip_reg_TACO1"/>
    <property type="match status" value="1"/>
</dbReference>
<dbReference type="InterPro" id="IPR017856">
    <property type="entry name" value="Integrase-like_N"/>
</dbReference>
<dbReference type="InterPro" id="IPR048300">
    <property type="entry name" value="TACO1_YebC-like_2nd/3rd_dom"/>
</dbReference>
<dbReference type="InterPro" id="IPR049083">
    <property type="entry name" value="TACO1_YebC_N"/>
</dbReference>
<dbReference type="InterPro" id="IPR002876">
    <property type="entry name" value="Transcrip_reg_TACO1-like"/>
</dbReference>
<dbReference type="InterPro" id="IPR026564">
    <property type="entry name" value="Transcrip_reg_TACO1-like_dom3"/>
</dbReference>
<dbReference type="InterPro" id="IPR029072">
    <property type="entry name" value="YebC-like"/>
</dbReference>
<dbReference type="NCBIfam" id="NF001030">
    <property type="entry name" value="PRK00110.1"/>
    <property type="match status" value="1"/>
</dbReference>
<dbReference type="NCBIfam" id="NF009044">
    <property type="entry name" value="PRK12378.1"/>
    <property type="match status" value="1"/>
</dbReference>
<dbReference type="NCBIfam" id="TIGR01033">
    <property type="entry name" value="YebC/PmpR family DNA-binding transcriptional regulator"/>
    <property type="match status" value="1"/>
</dbReference>
<dbReference type="PANTHER" id="PTHR12532:SF6">
    <property type="entry name" value="TRANSCRIPTIONAL REGULATORY PROTEIN YEBC-RELATED"/>
    <property type="match status" value="1"/>
</dbReference>
<dbReference type="PANTHER" id="PTHR12532">
    <property type="entry name" value="TRANSLATIONAL ACTIVATOR OF CYTOCHROME C OXIDASE 1"/>
    <property type="match status" value="1"/>
</dbReference>
<dbReference type="Pfam" id="PF20772">
    <property type="entry name" value="TACO1_YebC_N"/>
    <property type="match status" value="1"/>
</dbReference>
<dbReference type="Pfam" id="PF01709">
    <property type="entry name" value="Transcrip_reg"/>
    <property type="match status" value="1"/>
</dbReference>
<dbReference type="SUPFAM" id="SSF75625">
    <property type="entry name" value="YebC-like"/>
    <property type="match status" value="1"/>
</dbReference>
<protein>
    <recommendedName>
        <fullName evidence="1">Probable transcriptional regulatory protein MS53_0373</fullName>
    </recommendedName>
</protein>
<gene>
    <name type="ordered locus">MS53_0373</name>
</gene>
<accession>Q4A636</accession>
<sequence length="240" mass="26817">MAGHSHSANIAHRKNAQDAARGKIFQKLSKEIFVAAQKGFDPEMNSALKLAISKAKAKNMPKDNIERAISKAKGDKNSNSFTETIFNATLSGGVSFIVTTLSDNLNRTRSNMTALFNKQNASLGKTGQIPFVFDHKGIIEFSKGELSEDDLMMVALENGAQEIETTDETFVLISNPEDFSQLKKALEDSFKIEEFLQCEILYLPNTYAEVSEEKQQKLLEFIDKLKDDDDVQDVYHNLDI</sequence>
<keyword id="KW-0963">Cytoplasm</keyword>
<keyword id="KW-0238">DNA-binding</keyword>
<keyword id="KW-1185">Reference proteome</keyword>
<keyword id="KW-0804">Transcription</keyword>
<keyword id="KW-0805">Transcription regulation</keyword>
<name>Y373_MYCS5</name>
<feature type="chain" id="PRO_0000257084" description="Probable transcriptional regulatory protein MS53_0373">
    <location>
        <begin position="1"/>
        <end position="240"/>
    </location>
</feature>
<comment type="subcellular location">
    <subcellularLocation>
        <location evidence="1">Cytoplasm</location>
    </subcellularLocation>
</comment>
<comment type="similarity">
    <text evidence="1">Belongs to the TACO1 family.</text>
</comment>
<evidence type="ECO:0000255" key="1">
    <source>
        <dbReference type="HAMAP-Rule" id="MF_00693"/>
    </source>
</evidence>
<proteinExistence type="inferred from homology"/>
<organism>
    <name type="scientific">Mycoplasmopsis synoviae (strain 53)</name>
    <name type="common">Mycoplasma synoviae</name>
    <dbReference type="NCBI Taxonomy" id="262723"/>
    <lineage>
        <taxon>Bacteria</taxon>
        <taxon>Bacillati</taxon>
        <taxon>Mycoplasmatota</taxon>
        <taxon>Mycoplasmoidales</taxon>
        <taxon>Metamycoplasmataceae</taxon>
        <taxon>Mycoplasmopsis</taxon>
    </lineage>
</organism>